<protein>
    <recommendedName>
        <fullName evidence="1">Outer-membrane lipoprotein carrier protein</fullName>
    </recommendedName>
</protein>
<sequence>MRLIRTLFVAALAMGTSLAHADDSAAVQRLTGLLNKAQTLTARFSQLTLDGSGTRLQETAGQLSLKRPGLFRWHTDAPNEQLLISNGEKVWLYDPDLEQVTIQKLDQRLTQTPALLLSGDISKISESFAITYKEGGNVVDFVLKPKTKDTLFDTLRLSFRSGKVNDMQMIDGVGQRTNILFFDVKMNEALDAKQFTFDVPPGVDVIQE</sequence>
<accession>A6V4H3</accession>
<feature type="signal peptide" evidence="1">
    <location>
        <begin position="1"/>
        <end position="21"/>
    </location>
</feature>
<feature type="chain" id="PRO_1000005701" description="Outer-membrane lipoprotein carrier protein">
    <location>
        <begin position="22"/>
        <end position="208"/>
    </location>
</feature>
<dbReference type="EMBL" id="CP000744">
    <property type="protein sequence ID" value="ABR86623.1"/>
    <property type="molecule type" value="Genomic_DNA"/>
</dbReference>
<dbReference type="RefSeq" id="WP_012075459.1">
    <property type="nucleotide sequence ID" value="NC_009656.1"/>
</dbReference>
<dbReference type="SMR" id="A6V4H3"/>
<dbReference type="KEGG" id="pap:PSPA7_2594"/>
<dbReference type="HOGENOM" id="CLU_087560_0_0_6"/>
<dbReference type="Proteomes" id="UP000001582">
    <property type="component" value="Chromosome"/>
</dbReference>
<dbReference type="GO" id="GO:0030288">
    <property type="term" value="C:outer membrane-bounded periplasmic space"/>
    <property type="evidence" value="ECO:0007669"/>
    <property type="project" value="TreeGrafter"/>
</dbReference>
<dbReference type="GO" id="GO:0044874">
    <property type="term" value="P:lipoprotein localization to outer membrane"/>
    <property type="evidence" value="ECO:0007669"/>
    <property type="project" value="UniProtKB-UniRule"/>
</dbReference>
<dbReference type="GO" id="GO:0042953">
    <property type="term" value="P:lipoprotein transport"/>
    <property type="evidence" value="ECO:0007669"/>
    <property type="project" value="InterPro"/>
</dbReference>
<dbReference type="CDD" id="cd16325">
    <property type="entry name" value="LolA"/>
    <property type="match status" value="1"/>
</dbReference>
<dbReference type="FunFam" id="2.50.20.10:FF:000007">
    <property type="entry name" value="Outer-membrane lipoprotein carrier protein"/>
    <property type="match status" value="1"/>
</dbReference>
<dbReference type="Gene3D" id="2.50.20.10">
    <property type="entry name" value="Lipoprotein localisation LolA/LolB/LppX"/>
    <property type="match status" value="1"/>
</dbReference>
<dbReference type="HAMAP" id="MF_00240">
    <property type="entry name" value="LolA"/>
    <property type="match status" value="1"/>
</dbReference>
<dbReference type="InterPro" id="IPR029046">
    <property type="entry name" value="LolA/LolB/LppX"/>
</dbReference>
<dbReference type="InterPro" id="IPR004564">
    <property type="entry name" value="OM_lipoprot_carrier_LolA-like"/>
</dbReference>
<dbReference type="InterPro" id="IPR018323">
    <property type="entry name" value="OM_lipoprot_carrier_LolA_Pbac"/>
</dbReference>
<dbReference type="NCBIfam" id="TIGR00547">
    <property type="entry name" value="lolA"/>
    <property type="match status" value="1"/>
</dbReference>
<dbReference type="PANTHER" id="PTHR35869">
    <property type="entry name" value="OUTER-MEMBRANE LIPOPROTEIN CARRIER PROTEIN"/>
    <property type="match status" value="1"/>
</dbReference>
<dbReference type="PANTHER" id="PTHR35869:SF1">
    <property type="entry name" value="OUTER-MEMBRANE LIPOPROTEIN CARRIER PROTEIN"/>
    <property type="match status" value="1"/>
</dbReference>
<dbReference type="Pfam" id="PF03548">
    <property type="entry name" value="LolA"/>
    <property type="match status" value="1"/>
</dbReference>
<dbReference type="SUPFAM" id="SSF89392">
    <property type="entry name" value="Prokaryotic lipoproteins and lipoprotein localization factors"/>
    <property type="match status" value="1"/>
</dbReference>
<reference key="1">
    <citation type="submission" date="2007-06" db="EMBL/GenBank/DDBJ databases">
        <authorList>
            <person name="Dodson R.J."/>
            <person name="Harkins D."/>
            <person name="Paulsen I.T."/>
        </authorList>
    </citation>
    <scope>NUCLEOTIDE SEQUENCE [LARGE SCALE GENOMIC DNA]</scope>
    <source>
        <strain>DSM 24068 / PA7</strain>
    </source>
</reference>
<organism>
    <name type="scientific">Pseudomonas paraeruginosa (strain DSM 24068 / PA7)</name>
    <name type="common">Pseudomonas aeruginosa (strain PA7)</name>
    <dbReference type="NCBI Taxonomy" id="381754"/>
    <lineage>
        <taxon>Bacteria</taxon>
        <taxon>Pseudomonadati</taxon>
        <taxon>Pseudomonadota</taxon>
        <taxon>Gammaproteobacteria</taxon>
        <taxon>Pseudomonadales</taxon>
        <taxon>Pseudomonadaceae</taxon>
        <taxon>Pseudomonas</taxon>
        <taxon>Pseudomonas paraeruginosa</taxon>
    </lineage>
</organism>
<proteinExistence type="inferred from homology"/>
<comment type="function">
    <text evidence="1">Participates in the translocation of lipoproteins from the inner membrane to the outer membrane. Only forms a complex with a lipoprotein if the residue after the N-terminal Cys is not an aspartate (The Asp acts as a targeting signal to indicate that the lipoprotein should stay in the inner membrane).</text>
</comment>
<comment type="subunit">
    <text evidence="1">Monomer.</text>
</comment>
<comment type="subcellular location">
    <subcellularLocation>
        <location evidence="1">Periplasm</location>
    </subcellularLocation>
</comment>
<comment type="similarity">
    <text evidence="1">Belongs to the LolA family.</text>
</comment>
<keyword id="KW-0143">Chaperone</keyword>
<keyword id="KW-0574">Periplasm</keyword>
<keyword id="KW-0653">Protein transport</keyword>
<keyword id="KW-0732">Signal</keyword>
<keyword id="KW-0813">Transport</keyword>
<name>LOLA_PSEP7</name>
<evidence type="ECO:0000255" key="1">
    <source>
        <dbReference type="HAMAP-Rule" id="MF_00240"/>
    </source>
</evidence>
<gene>
    <name evidence="1" type="primary">lolA</name>
    <name type="ordered locus">PSPA7_2594</name>
</gene>